<proteinExistence type="inferred from homology"/>
<protein>
    <recommendedName>
        <fullName>DegV domain-containing protein BH3627</fullName>
    </recommendedName>
</protein>
<keyword id="KW-0446">Lipid-binding</keyword>
<keyword id="KW-1185">Reference proteome</keyword>
<organism>
    <name type="scientific">Halalkalibacterium halodurans (strain ATCC BAA-125 / DSM 18197 / FERM 7344 / JCM 9153 / C-125)</name>
    <name type="common">Bacillus halodurans</name>
    <dbReference type="NCBI Taxonomy" id="272558"/>
    <lineage>
        <taxon>Bacteria</taxon>
        <taxon>Bacillati</taxon>
        <taxon>Bacillota</taxon>
        <taxon>Bacilli</taxon>
        <taxon>Bacillales</taxon>
        <taxon>Bacillaceae</taxon>
        <taxon>Halalkalibacterium (ex Joshi et al. 2022)</taxon>
    </lineage>
</organism>
<gene>
    <name type="ordered locus">BH3627</name>
</gene>
<sequence>MTKIAIVTDSTAYLGPKRAKELGVIVVPLSVVFGEEAYQEEVELSSADFYEKLKHEEKLPTTSQPAVGLFVETFERLAKEGFEVVISIHLSSKISGTYQSALTAGSMVEGIEVIGYDSGISCEPQANFVAEAAKLVKEGADPQTIIDHLDEVKKRTNALFVVHDLSHLHRGGRLNAAQLVVGSLLKIKPILHFEDGSIVPLEKVRTEKKAWARVKELFAEEASSASSVKATVIHANRLDGAEKLADEIRSQFSHVDVSISHFGPVIGTHLGEGSIGLSWYIEK</sequence>
<dbReference type="EMBL" id="BA000004">
    <property type="protein sequence ID" value="BAB07346.1"/>
    <property type="molecule type" value="Genomic_DNA"/>
</dbReference>
<dbReference type="PIR" id="C84103">
    <property type="entry name" value="C84103"/>
</dbReference>
<dbReference type="RefSeq" id="WP_010899755.1">
    <property type="nucleotide sequence ID" value="NC_002570.2"/>
</dbReference>
<dbReference type="SMR" id="Q9K6U8"/>
<dbReference type="STRING" id="272558.gene:10729540"/>
<dbReference type="KEGG" id="bha:BH3627"/>
<dbReference type="eggNOG" id="COG1307">
    <property type="taxonomic scope" value="Bacteria"/>
</dbReference>
<dbReference type="HOGENOM" id="CLU_048251_3_1_9"/>
<dbReference type="OrthoDB" id="9775494at2"/>
<dbReference type="Proteomes" id="UP000001258">
    <property type="component" value="Chromosome"/>
</dbReference>
<dbReference type="GO" id="GO:0008289">
    <property type="term" value="F:lipid binding"/>
    <property type="evidence" value="ECO:0007669"/>
    <property type="project" value="UniProtKB-KW"/>
</dbReference>
<dbReference type="Gene3D" id="3.30.1180.10">
    <property type="match status" value="1"/>
</dbReference>
<dbReference type="Gene3D" id="3.40.50.10170">
    <property type="match status" value="1"/>
</dbReference>
<dbReference type="InterPro" id="IPR003797">
    <property type="entry name" value="DegV"/>
</dbReference>
<dbReference type="InterPro" id="IPR043168">
    <property type="entry name" value="DegV_C"/>
</dbReference>
<dbReference type="InterPro" id="IPR050270">
    <property type="entry name" value="DegV_domain_contain"/>
</dbReference>
<dbReference type="NCBIfam" id="TIGR00762">
    <property type="entry name" value="DegV"/>
    <property type="match status" value="1"/>
</dbReference>
<dbReference type="PANTHER" id="PTHR33434">
    <property type="entry name" value="DEGV DOMAIN-CONTAINING PROTEIN DR_1986-RELATED"/>
    <property type="match status" value="1"/>
</dbReference>
<dbReference type="PANTHER" id="PTHR33434:SF2">
    <property type="entry name" value="FATTY ACID-BINDING PROTEIN TM_1468"/>
    <property type="match status" value="1"/>
</dbReference>
<dbReference type="Pfam" id="PF02645">
    <property type="entry name" value="DegV"/>
    <property type="match status" value="1"/>
</dbReference>
<dbReference type="SUPFAM" id="SSF82549">
    <property type="entry name" value="DAK1/DegV-like"/>
    <property type="match status" value="1"/>
</dbReference>
<dbReference type="PROSITE" id="PS51482">
    <property type="entry name" value="DEGV"/>
    <property type="match status" value="1"/>
</dbReference>
<name>Y3627_HALH5</name>
<reference key="1">
    <citation type="journal article" date="2000" name="Nucleic Acids Res.">
        <title>Complete genome sequence of the alkaliphilic bacterium Bacillus halodurans and genomic sequence comparison with Bacillus subtilis.</title>
        <authorList>
            <person name="Takami H."/>
            <person name="Nakasone K."/>
            <person name="Takaki Y."/>
            <person name="Maeno G."/>
            <person name="Sasaki R."/>
            <person name="Masui N."/>
            <person name="Fuji F."/>
            <person name="Hirama C."/>
            <person name="Nakamura Y."/>
            <person name="Ogasawara N."/>
            <person name="Kuhara S."/>
            <person name="Horikoshi K."/>
        </authorList>
    </citation>
    <scope>NUCLEOTIDE SEQUENCE [LARGE SCALE GENOMIC DNA]</scope>
    <source>
        <strain>ATCC BAA-125 / DSM 18197 / FERM 7344 / JCM 9153 / C-125</strain>
    </source>
</reference>
<evidence type="ECO:0000250" key="1"/>
<evidence type="ECO:0000250" key="2">
    <source>
        <dbReference type="UniProtKB" id="Q9X1H9"/>
    </source>
</evidence>
<evidence type="ECO:0000255" key="3">
    <source>
        <dbReference type="PROSITE-ProRule" id="PRU00815"/>
    </source>
</evidence>
<feature type="chain" id="PRO_0000209750" description="DegV domain-containing protein BH3627">
    <location>
        <begin position="1"/>
        <end position="283"/>
    </location>
</feature>
<feature type="domain" description="DegV" evidence="3">
    <location>
        <begin position="4"/>
        <end position="281"/>
    </location>
</feature>
<feature type="binding site" evidence="2">
    <location>
        <position position="62"/>
    </location>
    <ligand>
        <name>hexadecanoate</name>
        <dbReference type="ChEBI" id="CHEBI:7896"/>
    </ligand>
</feature>
<feature type="binding site" evidence="2">
    <location>
        <position position="95"/>
    </location>
    <ligand>
        <name>hexadecanoate</name>
        <dbReference type="ChEBI" id="CHEBI:7896"/>
    </ligand>
</feature>
<accession>Q9K6U8</accession>
<comment type="function">
    <text evidence="1">May bind long-chain fatty acids, such as palmitate, and may play a role in lipid transport or fatty acid metabolism.</text>
</comment>